<sequence>MSVNSRKRKVATKAAPVQSSSDEELADGLLDGILSHSEDESEDDQDAEDTDASSVIEGLSDEDFEDEEDSGDEAEEIRKQMRNLNTSGGSQQRKTRQPAHERLDDGADGELEGEEDESLKPNYTVTTDAHGQVRYLYKEIDPVYESDDSDAEATNTIGNIPLTYYDEYPHIGYDINGKKIMRPAKGEALDALLDSIDIPKGWTGLTDPQTGKPLNLSEEELDVLKRLTRNEVVEDGYDPYPEMVAYFSGKQEIMPLSAAPEPKRRFIPSKHEAKRVMKIVKAIREGRIKPYKAPEEREEDEQISYDVWADEKPRPEHSMHIPAPKLPPPGYEASYHPPPEYLPDKAEEEAWLQADEEDREKDFLPKNYEALRKVPGYETFVKERFERSLDLYLAPRVRRNRLNIDPESLLPKLPDPEDLKPFPTTCAAIFRGQEGRVRCVSVDPQGIFVASGGDDGYVRIWELLTGRQVWNAKLSDEEAVDAVQWRPTKDASVLAAASGEHVYLIVPFTLLSPDVEQSSRDVLDAGWGYATSKPSTAANGEAPKQSPGKWSRPGSRMENKGILVQIEVRSAVKIINWHRRGDYFATVSPRGQSTAVAIHTVSKHLTQLPFRRLKGIAQTAQFHPSKAIFFVATRNTIRSYDLAKQELVKILQPGAKWISSIDVHPGGDNIIVGTYDKRLLWHDLDLSNKPYKTLRFHKEAIRAVKFHQGGLPLFADASDDGSLQIFHGKVVDDLMENATIVPLKVLRGHKVKSRLGVMDLDWHPREPWCVSAGADGTLRLWN</sequence>
<name>ERB1_PHANO</name>
<reference key="1">
    <citation type="journal article" date="2007" name="Plant Cell">
        <title>Dothideomycete-plant interactions illuminated by genome sequencing and EST analysis of the wheat pathogen Stagonospora nodorum.</title>
        <authorList>
            <person name="Hane J.K."/>
            <person name="Lowe R.G.T."/>
            <person name="Solomon P.S."/>
            <person name="Tan K.-C."/>
            <person name="Schoch C.L."/>
            <person name="Spatafora J.W."/>
            <person name="Crous P.W."/>
            <person name="Kodira C.D."/>
            <person name="Birren B.W."/>
            <person name="Galagan J.E."/>
            <person name="Torriani S.F.F."/>
            <person name="McDonald B.A."/>
            <person name="Oliver R.P."/>
        </authorList>
    </citation>
    <scope>NUCLEOTIDE SEQUENCE [LARGE SCALE GENOMIC DNA]</scope>
    <source>
        <strain>SN15 / ATCC MYA-4574 / FGSC 10173</strain>
    </source>
</reference>
<evidence type="ECO:0000255" key="1">
    <source>
        <dbReference type="HAMAP-Rule" id="MF_03027"/>
    </source>
</evidence>
<evidence type="ECO:0000256" key="2">
    <source>
        <dbReference type="SAM" id="MobiDB-lite"/>
    </source>
</evidence>
<evidence type="ECO:0000305" key="3"/>
<accession>Q0UN56</accession>
<organism>
    <name type="scientific">Phaeosphaeria nodorum (strain SN15 / ATCC MYA-4574 / FGSC 10173)</name>
    <name type="common">Glume blotch fungus</name>
    <name type="synonym">Parastagonospora nodorum</name>
    <dbReference type="NCBI Taxonomy" id="321614"/>
    <lineage>
        <taxon>Eukaryota</taxon>
        <taxon>Fungi</taxon>
        <taxon>Dikarya</taxon>
        <taxon>Ascomycota</taxon>
        <taxon>Pezizomycotina</taxon>
        <taxon>Dothideomycetes</taxon>
        <taxon>Pleosporomycetidae</taxon>
        <taxon>Pleosporales</taxon>
        <taxon>Pleosporineae</taxon>
        <taxon>Phaeosphaeriaceae</taxon>
        <taxon>Parastagonospora</taxon>
    </lineage>
</organism>
<gene>
    <name evidence="1" type="primary">ERB1</name>
    <name type="ORF">SNOG_06808</name>
</gene>
<feature type="chain" id="PRO_0000370437" description="Ribosome biogenesis protein ERB1">
    <location>
        <begin position="1"/>
        <end position="782"/>
    </location>
</feature>
<feature type="repeat" description="WD 1">
    <location>
        <begin position="432"/>
        <end position="471"/>
    </location>
</feature>
<feature type="repeat" description="WD 2">
    <location>
        <begin position="475"/>
        <end position="516"/>
    </location>
</feature>
<feature type="repeat" description="WD 3">
    <location>
        <begin position="612"/>
        <end position="652"/>
    </location>
</feature>
<feature type="repeat" description="WD 4">
    <location>
        <begin position="653"/>
        <end position="692"/>
    </location>
</feature>
<feature type="repeat" description="WD 5">
    <location>
        <begin position="696"/>
        <end position="736"/>
    </location>
</feature>
<feature type="repeat" description="WD 6">
    <location>
        <begin position="752"/>
        <end position="782"/>
    </location>
</feature>
<feature type="region of interest" description="Disordered" evidence="2">
    <location>
        <begin position="1"/>
        <end position="120"/>
    </location>
</feature>
<feature type="region of interest" description="Disordered" evidence="2">
    <location>
        <begin position="533"/>
        <end position="556"/>
    </location>
</feature>
<feature type="compositionally biased region" description="Basic residues" evidence="2">
    <location>
        <begin position="1"/>
        <end position="11"/>
    </location>
</feature>
<feature type="compositionally biased region" description="Acidic residues" evidence="2">
    <location>
        <begin position="39"/>
        <end position="51"/>
    </location>
</feature>
<feature type="compositionally biased region" description="Acidic residues" evidence="2">
    <location>
        <begin position="59"/>
        <end position="75"/>
    </location>
</feature>
<feature type="compositionally biased region" description="Polar residues" evidence="2">
    <location>
        <begin position="82"/>
        <end position="92"/>
    </location>
</feature>
<feature type="compositionally biased region" description="Acidic residues" evidence="2">
    <location>
        <begin position="106"/>
        <end position="117"/>
    </location>
</feature>
<keyword id="KW-0539">Nucleus</keyword>
<keyword id="KW-0677">Repeat</keyword>
<keyword id="KW-0690">Ribosome biogenesis</keyword>
<keyword id="KW-0698">rRNA processing</keyword>
<keyword id="KW-0853">WD repeat</keyword>
<comment type="function">
    <text evidence="1">Component of the NOP7 complex, which is required for maturation of the 25S and 5.8S ribosomal RNAs and formation of the 60S ribosome.</text>
</comment>
<comment type="subunit">
    <text evidence="1">Component of the NOP7 complex, composed of ERB1, NOP7 and YTM1. The complex is held together by ERB1, which interacts with NOP7 via its N-terminal domain and with YTM1 via a high-affinity interaction between the seven-bladed beta-propeller domains of the 2 proteins. The NOP7 complex associates with the 66S pre-ribosome.</text>
</comment>
<comment type="subcellular location">
    <subcellularLocation>
        <location evidence="1">Nucleus</location>
        <location evidence="1">Nucleolus</location>
    </subcellularLocation>
    <subcellularLocation>
        <location evidence="1">Nucleus</location>
        <location evidence="1">Nucleoplasm</location>
    </subcellularLocation>
</comment>
<comment type="similarity">
    <text evidence="1">Belongs to the WD repeat BOP1/ERB1 family.</text>
</comment>
<comment type="sequence caution" evidence="3">
    <conflict type="erroneous gene model prediction">
        <sequence resource="EMBL-CDS" id="EAT85459"/>
    </conflict>
</comment>
<protein>
    <recommendedName>
        <fullName evidence="1">Ribosome biogenesis protein ERB1</fullName>
    </recommendedName>
    <alternativeName>
        <fullName evidence="1">Eukaryotic ribosome biogenesis protein 1</fullName>
    </alternativeName>
</protein>
<proteinExistence type="inferred from homology"/>
<dbReference type="EMBL" id="CH445334">
    <property type="protein sequence ID" value="EAT85459.2"/>
    <property type="status" value="ALT_SEQ"/>
    <property type="molecule type" value="Genomic_DNA"/>
</dbReference>
<dbReference type="RefSeq" id="XP_001797170.1">
    <property type="nucleotide sequence ID" value="XM_001797118.1"/>
</dbReference>
<dbReference type="SMR" id="Q0UN56"/>
<dbReference type="FunCoup" id="Q0UN56">
    <property type="interactions" value="940"/>
</dbReference>
<dbReference type="STRING" id="321614.Q0UN56"/>
<dbReference type="GeneID" id="5974060"/>
<dbReference type="KEGG" id="pno:SNOG_06808"/>
<dbReference type="VEuPathDB" id="FungiDB:JI435_068080"/>
<dbReference type="eggNOG" id="KOG0650">
    <property type="taxonomic scope" value="Eukaryota"/>
</dbReference>
<dbReference type="InParanoid" id="Q0UN56"/>
<dbReference type="OMA" id="MRPAKGE"/>
<dbReference type="OrthoDB" id="5571054at2759"/>
<dbReference type="Proteomes" id="UP000001055">
    <property type="component" value="Unassembled WGS sequence"/>
</dbReference>
<dbReference type="GO" id="GO:0005654">
    <property type="term" value="C:nucleoplasm"/>
    <property type="evidence" value="ECO:0007669"/>
    <property type="project" value="UniProtKB-SubCell"/>
</dbReference>
<dbReference type="GO" id="GO:0070545">
    <property type="term" value="C:PeBoW complex"/>
    <property type="evidence" value="ECO:0000318"/>
    <property type="project" value="GO_Central"/>
</dbReference>
<dbReference type="GO" id="GO:0030687">
    <property type="term" value="C:preribosome, large subunit precursor"/>
    <property type="evidence" value="ECO:0000318"/>
    <property type="project" value="GO_Central"/>
</dbReference>
<dbReference type="GO" id="GO:0043021">
    <property type="term" value="F:ribonucleoprotein complex binding"/>
    <property type="evidence" value="ECO:0000318"/>
    <property type="project" value="GO_Central"/>
</dbReference>
<dbReference type="GO" id="GO:0000466">
    <property type="term" value="P:maturation of 5.8S rRNA from tricistronic rRNA transcript (SSU-rRNA, 5.8S rRNA, LSU-rRNA)"/>
    <property type="evidence" value="ECO:0007669"/>
    <property type="project" value="UniProtKB-UniRule"/>
</dbReference>
<dbReference type="GO" id="GO:0000463">
    <property type="term" value="P:maturation of LSU-rRNA from tricistronic rRNA transcript (SSU-rRNA, 5.8S rRNA, LSU-rRNA)"/>
    <property type="evidence" value="ECO:0000318"/>
    <property type="project" value="GO_Central"/>
</dbReference>
<dbReference type="FunFam" id="2.130.10.10:FF:000061">
    <property type="entry name" value="Ribosome biogenesis protein BOP1 homolog"/>
    <property type="match status" value="1"/>
</dbReference>
<dbReference type="Gene3D" id="2.130.10.10">
    <property type="entry name" value="YVTN repeat-like/Quinoprotein amine dehydrogenase"/>
    <property type="match status" value="1"/>
</dbReference>
<dbReference type="HAMAP" id="MF_03027">
    <property type="entry name" value="BOP1"/>
    <property type="match status" value="1"/>
</dbReference>
<dbReference type="InterPro" id="IPR028598">
    <property type="entry name" value="BOP1/Erb1"/>
</dbReference>
<dbReference type="InterPro" id="IPR012953">
    <property type="entry name" value="BOP1_N_dom"/>
</dbReference>
<dbReference type="InterPro" id="IPR015943">
    <property type="entry name" value="WD40/YVTN_repeat-like_dom_sf"/>
</dbReference>
<dbReference type="InterPro" id="IPR019775">
    <property type="entry name" value="WD40_repeat_CS"/>
</dbReference>
<dbReference type="InterPro" id="IPR036322">
    <property type="entry name" value="WD40_repeat_dom_sf"/>
</dbReference>
<dbReference type="InterPro" id="IPR001680">
    <property type="entry name" value="WD40_rpt"/>
</dbReference>
<dbReference type="PANTHER" id="PTHR17605:SF0">
    <property type="entry name" value="RIBOSOME BIOGENESIS PROTEIN BOP1"/>
    <property type="match status" value="1"/>
</dbReference>
<dbReference type="PANTHER" id="PTHR17605">
    <property type="entry name" value="RIBOSOME BIOGENESIS PROTEIN BOP1 BLOCK OF PROLIFERATION 1 PROTEIN"/>
    <property type="match status" value="1"/>
</dbReference>
<dbReference type="Pfam" id="PF08145">
    <property type="entry name" value="BOP1NT"/>
    <property type="match status" value="1"/>
</dbReference>
<dbReference type="Pfam" id="PF00400">
    <property type="entry name" value="WD40"/>
    <property type="match status" value="2"/>
</dbReference>
<dbReference type="SMART" id="SM01035">
    <property type="entry name" value="BOP1NT"/>
    <property type="match status" value="1"/>
</dbReference>
<dbReference type="SMART" id="SM00320">
    <property type="entry name" value="WD40"/>
    <property type="match status" value="4"/>
</dbReference>
<dbReference type="SUPFAM" id="SSF50978">
    <property type="entry name" value="WD40 repeat-like"/>
    <property type="match status" value="1"/>
</dbReference>
<dbReference type="PROSITE" id="PS00678">
    <property type="entry name" value="WD_REPEATS_1"/>
    <property type="match status" value="1"/>
</dbReference>
<dbReference type="PROSITE" id="PS50082">
    <property type="entry name" value="WD_REPEATS_2"/>
    <property type="match status" value="2"/>
</dbReference>
<dbReference type="PROSITE" id="PS50294">
    <property type="entry name" value="WD_REPEATS_REGION"/>
    <property type="match status" value="2"/>
</dbReference>